<evidence type="ECO:0000255" key="1">
    <source>
        <dbReference type="HAMAP-Rule" id="MF_00455"/>
    </source>
</evidence>
<sequence>MQSYFNELEQVRYEGSQSTNPLAFHHYNPDEMILGKRMADHLRFAACYWHTFCWGGADMFGANAFDRPWQQPGDALALAKRKAKVAFEFFHKLNVPYYCFHDVDVSPEGASLQEYLNNFAVMTDVLAEKQAASGVKLLWGTANCFTHPRYGAGAATNPDPEVFSWAATQVFTAMNATRQLGGENYVLWGGREGYETLLNTDLRQEREQIGRFMQMVVEHKHKTGFQGTLLIEPKPQEPTKHQYDYDVATVYGFLKQFGLEKEIKVNIEANHATLAGHSFHHEIASAIALGIFGSVDANRGDPQLGWDTDQFPNSVEENTLVMFEILKAGGFTTGGLNFDAKVRRQSTDKYDLFYGHIGAMDTMALALKFAAKMIEDGQLDQIVAKRYAGWNSELGQQILQGKMSLEELSRYASQHNLNPQHQSGHQELLENKVNRYLFG</sequence>
<organism>
    <name type="scientific">Yersinia pestis bv. Antiqua (strain Angola)</name>
    <dbReference type="NCBI Taxonomy" id="349746"/>
    <lineage>
        <taxon>Bacteria</taxon>
        <taxon>Pseudomonadati</taxon>
        <taxon>Pseudomonadota</taxon>
        <taxon>Gammaproteobacteria</taxon>
        <taxon>Enterobacterales</taxon>
        <taxon>Yersiniaceae</taxon>
        <taxon>Yersinia</taxon>
    </lineage>
</organism>
<dbReference type="EC" id="5.3.1.5" evidence="1"/>
<dbReference type="EMBL" id="CP000901">
    <property type="protein sequence ID" value="ABX85301.1"/>
    <property type="molecule type" value="Genomic_DNA"/>
</dbReference>
<dbReference type="RefSeq" id="WP_012230197.1">
    <property type="nucleotide sequence ID" value="NC_010159.1"/>
</dbReference>
<dbReference type="SMR" id="A9R5Q1"/>
<dbReference type="KEGG" id="ypg:YpAngola_A4161"/>
<dbReference type="PATRIC" id="fig|349746.12.peg.896"/>
<dbReference type="GO" id="GO:0005737">
    <property type="term" value="C:cytoplasm"/>
    <property type="evidence" value="ECO:0007669"/>
    <property type="project" value="UniProtKB-SubCell"/>
</dbReference>
<dbReference type="GO" id="GO:0000287">
    <property type="term" value="F:magnesium ion binding"/>
    <property type="evidence" value="ECO:0007669"/>
    <property type="project" value="UniProtKB-UniRule"/>
</dbReference>
<dbReference type="GO" id="GO:0009045">
    <property type="term" value="F:xylose isomerase activity"/>
    <property type="evidence" value="ECO:0007669"/>
    <property type="project" value="UniProtKB-UniRule"/>
</dbReference>
<dbReference type="GO" id="GO:0042732">
    <property type="term" value="P:D-xylose metabolic process"/>
    <property type="evidence" value="ECO:0007669"/>
    <property type="project" value="UniProtKB-UniRule"/>
</dbReference>
<dbReference type="FunFam" id="3.20.20.150:FF:000002">
    <property type="entry name" value="Xylose isomerase"/>
    <property type="match status" value="1"/>
</dbReference>
<dbReference type="Gene3D" id="3.20.20.150">
    <property type="entry name" value="Divalent-metal-dependent TIM barrel enzymes"/>
    <property type="match status" value="1"/>
</dbReference>
<dbReference type="HAMAP" id="MF_00455">
    <property type="entry name" value="Xylose_isom_A"/>
    <property type="match status" value="1"/>
</dbReference>
<dbReference type="InterPro" id="IPR036237">
    <property type="entry name" value="Xyl_isomerase-like_sf"/>
</dbReference>
<dbReference type="InterPro" id="IPR013452">
    <property type="entry name" value="Xylose_isom_bac"/>
</dbReference>
<dbReference type="InterPro" id="IPR001998">
    <property type="entry name" value="Xylose_isomerase"/>
</dbReference>
<dbReference type="NCBIfam" id="NF003998">
    <property type="entry name" value="PRK05474.1"/>
    <property type="match status" value="1"/>
</dbReference>
<dbReference type="NCBIfam" id="TIGR02630">
    <property type="entry name" value="xylose_isom_A"/>
    <property type="match status" value="1"/>
</dbReference>
<dbReference type="PANTHER" id="PTHR48408">
    <property type="match status" value="1"/>
</dbReference>
<dbReference type="PANTHER" id="PTHR48408:SF1">
    <property type="entry name" value="XYLOSE ISOMERASE"/>
    <property type="match status" value="1"/>
</dbReference>
<dbReference type="PRINTS" id="PR00688">
    <property type="entry name" value="XYLOSISMRASE"/>
</dbReference>
<dbReference type="SUPFAM" id="SSF51658">
    <property type="entry name" value="Xylose isomerase-like"/>
    <property type="match status" value="1"/>
</dbReference>
<dbReference type="PROSITE" id="PS51415">
    <property type="entry name" value="XYLOSE_ISOMERASE"/>
    <property type="match status" value="1"/>
</dbReference>
<accession>A9R5Q1</accession>
<reference key="1">
    <citation type="journal article" date="2010" name="J. Bacteriol.">
        <title>Genome sequence of the deep-rooted Yersinia pestis strain Angola reveals new insights into the evolution and pangenome of the plague bacterium.</title>
        <authorList>
            <person name="Eppinger M."/>
            <person name="Worsham P.L."/>
            <person name="Nikolich M.P."/>
            <person name="Riley D.R."/>
            <person name="Sebastian Y."/>
            <person name="Mou S."/>
            <person name="Achtman M."/>
            <person name="Lindler L.E."/>
            <person name="Ravel J."/>
        </authorList>
    </citation>
    <scope>NUCLEOTIDE SEQUENCE [LARGE SCALE GENOMIC DNA]</scope>
    <source>
        <strain>Angola</strain>
    </source>
</reference>
<keyword id="KW-0119">Carbohydrate metabolism</keyword>
<keyword id="KW-0963">Cytoplasm</keyword>
<keyword id="KW-0413">Isomerase</keyword>
<keyword id="KW-0460">Magnesium</keyword>
<keyword id="KW-0479">Metal-binding</keyword>
<keyword id="KW-0859">Xylose metabolism</keyword>
<protein>
    <recommendedName>
        <fullName evidence="1">Xylose isomerase</fullName>
        <ecNumber evidence="1">5.3.1.5</ecNumber>
    </recommendedName>
</protein>
<proteinExistence type="inferred from homology"/>
<feature type="chain" id="PRO_1000200315" description="Xylose isomerase">
    <location>
        <begin position="1"/>
        <end position="439"/>
    </location>
</feature>
<feature type="active site" evidence="1">
    <location>
        <position position="101"/>
    </location>
</feature>
<feature type="active site" evidence="1">
    <location>
        <position position="104"/>
    </location>
</feature>
<feature type="binding site" evidence="1">
    <location>
        <position position="232"/>
    </location>
    <ligand>
        <name>Mg(2+)</name>
        <dbReference type="ChEBI" id="CHEBI:18420"/>
        <label>1</label>
    </ligand>
</feature>
<feature type="binding site" evidence="1">
    <location>
        <position position="268"/>
    </location>
    <ligand>
        <name>Mg(2+)</name>
        <dbReference type="ChEBI" id="CHEBI:18420"/>
        <label>1</label>
    </ligand>
</feature>
<feature type="binding site" evidence="1">
    <location>
        <position position="268"/>
    </location>
    <ligand>
        <name>Mg(2+)</name>
        <dbReference type="ChEBI" id="CHEBI:18420"/>
        <label>2</label>
    </ligand>
</feature>
<feature type="binding site" evidence="1">
    <location>
        <position position="271"/>
    </location>
    <ligand>
        <name>Mg(2+)</name>
        <dbReference type="ChEBI" id="CHEBI:18420"/>
        <label>2</label>
    </ligand>
</feature>
<feature type="binding site" evidence="1">
    <location>
        <position position="296"/>
    </location>
    <ligand>
        <name>Mg(2+)</name>
        <dbReference type="ChEBI" id="CHEBI:18420"/>
        <label>1</label>
    </ligand>
</feature>
<feature type="binding site" evidence="1">
    <location>
        <position position="307"/>
    </location>
    <ligand>
        <name>Mg(2+)</name>
        <dbReference type="ChEBI" id="CHEBI:18420"/>
        <label>2</label>
    </ligand>
</feature>
<feature type="binding site" evidence="1">
    <location>
        <position position="309"/>
    </location>
    <ligand>
        <name>Mg(2+)</name>
        <dbReference type="ChEBI" id="CHEBI:18420"/>
        <label>2</label>
    </ligand>
</feature>
<feature type="binding site" evidence="1">
    <location>
        <position position="339"/>
    </location>
    <ligand>
        <name>Mg(2+)</name>
        <dbReference type="ChEBI" id="CHEBI:18420"/>
        <label>1</label>
    </ligand>
</feature>
<comment type="catalytic activity">
    <reaction evidence="1">
        <text>alpha-D-xylose = alpha-D-xylulofuranose</text>
        <dbReference type="Rhea" id="RHEA:22816"/>
        <dbReference type="ChEBI" id="CHEBI:28518"/>
        <dbReference type="ChEBI" id="CHEBI:188998"/>
        <dbReference type="EC" id="5.3.1.5"/>
    </reaction>
</comment>
<comment type="cofactor">
    <cofactor evidence="1">
        <name>Mg(2+)</name>
        <dbReference type="ChEBI" id="CHEBI:18420"/>
    </cofactor>
    <text evidence="1">Binds 2 magnesium ions per subunit.</text>
</comment>
<comment type="subunit">
    <text evidence="1">Homotetramer.</text>
</comment>
<comment type="subcellular location">
    <subcellularLocation>
        <location evidence="1">Cytoplasm</location>
    </subcellularLocation>
</comment>
<comment type="similarity">
    <text evidence="1">Belongs to the xylose isomerase family.</text>
</comment>
<gene>
    <name evidence="1" type="primary">xylA</name>
    <name type="ordered locus">YpAngola_A4161</name>
</gene>
<name>XYLA_YERPG</name>